<proteinExistence type="evidence at transcript level"/>
<evidence type="ECO:0000250" key="1">
    <source>
        <dbReference type="UniProtKB" id="P04798"/>
    </source>
</evidence>
<evidence type="ECO:0000255" key="2"/>
<evidence type="ECO:0000256" key="3">
    <source>
        <dbReference type="SAM" id="MobiDB-lite"/>
    </source>
</evidence>
<evidence type="ECO:0000269" key="4">
    <source>
    </source>
</evidence>
<evidence type="ECO:0000303" key="5">
    <source>
    </source>
</evidence>
<evidence type="ECO:0000305" key="6"/>
<organism>
    <name type="scientific">Gibberella fujikuroi (strain CBS 195.34 / IMI 58289 / NRRL A-6831)</name>
    <name type="common">Bakanae and foot rot disease fungus</name>
    <name type="synonym">Fusarium fujikuroi</name>
    <dbReference type="NCBI Taxonomy" id="1279085"/>
    <lineage>
        <taxon>Eukaryota</taxon>
        <taxon>Fungi</taxon>
        <taxon>Dikarya</taxon>
        <taxon>Ascomycota</taxon>
        <taxon>Pezizomycotina</taxon>
        <taxon>Sordariomycetes</taxon>
        <taxon>Hypocreomycetidae</taxon>
        <taxon>Hypocreales</taxon>
        <taxon>Nectriaceae</taxon>
        <taxon>Fusarium</taxon>
        <taxon>Fusarium fujikuroi species complex</taxon>
    </lineage>
</organism>
<sequence>MLQTIPMPSRELTIALAVLSLLMVLVQRAGSRRRETKQLLSLPPSPPCANIIAGHLPTVLKAAKEHRQHLLFQKWAEEYGEVFFVQLGTIQEYFINSDQAVRAIFDKAAAQTSERPRWIVSNEQICNRLNLLLLSSSEKAWKSQRKATTFGLTNLNLADAGLPFLHFETLKFLNDIGQNPSKGADPQSLWSSIGRYTYSTFSSQIFGLDVPEDNSPVIDYIFETGLAQILGMLPGYYLVDTFNILDKLPLFLKPWERDAKSRHKRDYEWCCDKLKKVKSQIDAGEAPPHMTFIRRVIEDPNHLGLDSLEDASYLGMMLIIGASDTSRISTWSFLEAMLTFPDVCNKARKVIDSAVGDRVPVFEDLERVPYIRQVMKESWRWRPPVALGHPHTTTRDIMYKNYRIPKGARIHLNAWAIHRDPTRYPDPENFIPERFEGDTRSSQESAASPDVSKRDHFVFGAGRRICPGYHVADRSFAVSVMRILWAFDISLKPGTKLPLDPQSFPGDMPGNPGLELPVVLTVRSPERLETIQKEFEAAVQSRERMEPLVG</sequence>
<protein>
    <recommendedName>
        <fullName evidence="5">Cytochrome P450 monooxygenase FFUJ_09176</fullName>
        <ecNumber evidence="4">1.-.-.-</ecNumber>
    </recommendedName>
    <alternativeName>
        <fullName evidence="5">DMATS1 biosynthesis cluster protein FFUJ_09176</fullName>
    </alternativeName>
</protein>
<accession>S0ENB0</accession>
<dbReference type="EC" id="1.-.-.-" evidence="4"/>
<dbReference type="EMBL" id="HF679031">
    <property type="protein sequence ID" value="CCT73988.1"/>
    <property type="molecule type" value="Genomic_DNA"/>
</dbReference>
<dbReference type="RefSeq" id="XP_023436066.1">
    <property type="nucleotide sequence ID" value="XM_023568951.1"/>
</dbReference>
<dbReference type="SMR" id="S0ENB0"/>
<dbReference type="STRING" id="1279085.S0ENB0"/>
<dbReference type="EnsemblFungi" id="CCT73988">
    <property type="protein sequence ID" value="CCT73988"/>
    <property type="gene ID" value="FFUJ_09176"/>
</dbReference>
<dbReference type="GeneID" id="35402645"/>
<dbReference type="VEuPathDB" id="FungiDB:FFUJ_09176"/>
<dbReference type="HOGENOM" id="CLU_001570_2_1_1"/>
<dbReference type="Proteomes" id="UP000016800">
    <property type="component" value="Chromosome 9"/>
</dbReference>
<dbReference type="GO" id="GO:0020037">
    <property type="term" value="F:heme binding"/>
    <property type="evidence" value="ECO:0007669"/>
    <property type="project" value="InterPro"/>
</dbReference>
<dbReference type="GO" id="GO:0005506">
    <property type="term" value="F:iron ion binding"/>
    <property type="evidence" value="ECO:0007669"/>
    <property type="project" value="InterPro"/>
</dbReference>
<dbReference type="GO" id="GO:0004497">
    <property type="term" value="F:monooxygenase activity"/>
    <property type="evidence" value="ECO:0007669"/>
    <property type="project" value="UniProtKB-KW"/>
</dbReference>
<dbReference type="GO" id="GO:0016705">
    <property type="term" value="F:oxidoreductase activity, acting on paired donors, with incorporation or reduction of molecular oxygen"/>
    <property type="evidence" value="ECO:0007669"/>
    <property type="project" value="InterPro"/>
</dbReference>
<dbReference type="Gene3D" id="1.10.630.10">
    <property type="entry name" value="Cytochrome P450"/>
    <property type="match status" value="1"/>
</dbReference>
<dbReference type="InterPro" id="IPR001128">
    <property type="entry name" value="Cyt_P450"/>
</dbReference>
<dbReference type="InterPro" id="IPR017972">
    <property type="entry name" value="Cyt_P450_CS"/>
</dbReference>
<dbReference type="InterPro" id="IPR002401">
    <property type="entry name" value="Cyt_P450_E_grp-I"/>
</dbReference>
<dbReference type="InterPro" id="IPR036396">
    <property type="entry name" value="Cyt_P450_sf"/>
</dbReference>
<dbReference type="InterPro" id="IPR050364">
    <property type="entry name" value="Cytochrome_P450_fung"/>
</dbReference>
<dbReference type="PANTHER" id="PTHR46300:SF2">
    <property type="entry name" value="CYTOCHROME P450 MONOOXYGENASE ALNH-RELATED"/>
    <property type="match status" value="1"/>
</dbReference>
<dbReference type="PANTHER" id="PTHR46300">
    <property type="entry name" value="P450, PUTATIVE (EUROFUNG)-RELATED-RELATED"/>
    <property type="match status" value="1"/>
</dbReference>
<dbReference type="Pfam" id="PF00067">
    <property type="entry name" value="p450"/>
    <property type="match status" value="1"/>
</dbReference>
<dbReference type="PRINTS" id="PR00463">
    <property type="entry name" value="EP450I"/>
</dbReference>
<dbReference type="SUPFAM" id="SSF48264">
    <property type="entry name" value="Cytochrome P450"/>
    <property type="match status" value="1"/>
</dbReference>
<dbReference type="PROSITE" id="PS00086">
    <property type="entry name" value="CYTOCHROME_P450"/>
    <property type="match status" value="1"/>
</dbReference>
<feature type="signal peptide" evidence="2">
    <location>
        <begin position="1"/>
        <end position="31"/>
    </location>
</feature>
<feature type="chain" id="PRO_5004496262" description="Cytochrome P450 monooxygenase FFUJ_09176">
    <location>
        <begin position="32"/>
        <end position="550"/>
    </location>
</feature>
<feature type="region of interest" description="Disordered" evidence="3">
    <location>
        <begin position="430"/>
        <end position="451"/>
    </location>
</feature>
<feature type="compositionally biased region" description="Basic and acidic residues" evidence="3">
    <location>
        <begin position="430"/>
        <end position="441"/>
    </location>
</feature>
<feature type="binding site" description="axial binding residue" evidence="1">
    <location>
        <position position="466"/>
    </location>
    <ligand>
        <name>heme</name>
        <dbReference type="ChEBI" id="CHEBI:30413"/>
    </ligand>
    <ligandPart>
        <name>Fe</name>
        <dbReference type="ChEBI" id="CHEBI:18248"/>
    </ligandPart>
</feature>
<gene>
    <name type="ORF">FFUJ_09176</name>
</gene>
<keyword id="KW-0349">Heme</keyword>
<keyword id="KW-0408">Iron</keyword>
<keyword id="KW-0479">Metal-binding</keyword>
<keyword id="KW-0503">Monooxygenase</keyword>
<keyword id="KW-0560">Oxidoreductase</keyword>
<keyword id="KW-1185">Reference proteome</keyword>
<keyword id="KW-0732">Signal</keyword>
<reference key="1">
    <citation type="journal article" date="2013" name="PLoS Pathog.">
        <title>Deciphering the cryptic genome: genome-wide analyses of the rice pathogen Fusarium fujikuroi reveal complex regulation of secondary metabolism and novel metabolites.</title>
        <authorList>
            <person name="Wiemann P."/>
            <person name="Sieber C.M.K."/>
            <person name="von Bargen K.W."/>
            <person name="Studt L."/>
            <person name="Niehaus E.-M."/>
            <person name="Espino J.J."/>
            <person name="Huss K."/>
            <person name="Michielse C.B."/>
            <person name="Albermann S."/>
            <person name="Wagner D."/>
            <person name="Bergner S.V."/>
            <person name="Connolly L.R."/>
            <person name="Fischer A."/>
            <person name="Reuter G."/>
            <person name="Kleigrewe K."/>
            <person name="Bald T."/>
            <person name="Wingfield B.D."/>
            <person name="Ophir R."/>
            <person name="Freeman S."/>
            <person name="Hippler M."/>
            <person name="Smith K.M."/>
            <person name="Brown D.W."/>
            <person name="Proctor R.H."/>
            <person name="Muensterkoetter M."/>
            <person name="Freitag M."/>
            <person name="Humpf H.-U."/>
            <person name="Gueldener U."/>
            <person name="Tudzynski B."/>
        </authorList>
    </citation>
    <scope>NUCLEOTIDE SEQUENCE [LARGE SCALE GENOMIC DNA]</scope>
    <source>
        <strain>CBS 195.34 / IMI 58289 / NRRL A-6831</strain>
    </source>
</reference>
<reference key="2">
    <citation type="journal article" date="2017" name="ChemBioChem">
        <title>A Fungal N-Dimethylallyltryptophan Metabolite from Fusarium fujikuroi.</title>
        <authorList>
            <person name="Arndt B."/>
            <person name="Janevska S."/>
            <person name="Schmid R."/>
            <person name="Huebner F."/>
            <person name="Tudzynski B."/>
            <person name="Humpf H.U."/>
        </authorList>
    </citation>
    <scope>FUNCTION</scope>
    <scope>INDUCTION</scope>
    <scope>DISRUPTION PHENOTYPE</scope>
</reference>
<name>CP176_GIBF5</name>
<comment type="function">
    <text evidence="4">Cytochrome P450 monooxygenase; part of the DMATS1 gene cluster that mediates the biosynthesis of a reversely N-prenylated monomeric L-tryptophan (r-N-DMAT) (PubMed:28295904). Seems not to contribute to the final DMATS1 product (PubMed:28295904).</text>
</comment>
<comment type="induction">
    <text evidence="4">Expression is negaticely regulated by the global nitrogen regulator areA.</text>
</comment>
<comment type="disruption phenotype">
    <text evidence="4">Does not alter the amount of produced r-N-DMAT.</text>
</comment>
<comment type="similarity">
    <text evidence="6">Belongs to the cytochrome P450 family.</text>
</comment>